<evidence type="ECO:0000255" key="1">
    <source>
        <dbReference type="HAMAP-Rule" id="MF_01690"/>
    </source>
</evidence>
<evidence type="ECO:0000305" key="2"/>
<name>DAPE_RICM5</name>
<comment type="function">
    <text evidence="1">Catalyzes the hydrolysis of N-succinyl-L,L-diaminopimelic acid (SDAP), forming succinate and LL-2,6-diaminopimelate (DAP), an intermediate involved in the bacterial biosynthesis of lysine and meso-diaminopimelic acid, an essential component of bacterial cell walls.</text>
</comment>
<comment type="catalytic activity">
    <reaction evidence="1">
        <text>N-succinyl-(2S,6S)-2,6-diaminopimelate + H2O = (2S,6S)-2,6-diaminopimelate + succinate</text>
        <dbReference type="Rhea" id="RHEA:22608"/>
        <dbReference type="ChEBI" id="CHEBI:15377"/>
        <dbReference type="ChEBI" id="CHEBI:30031"/>
        <dbReference type="ChEBI" id="CHEBI:57609"/>
        <dbReference type="ChEBI" id="CHEBI:58087"/>
        <dbReference type="EC" id="3.5.1.18"/>
    </reaction>
</comment>
<comment type="cofactor">
    <cofactor evidence="1">
        <name>Zn(2+)</name>
        <dbReference type="ChEBI" id="CHEBI:29105"/>
    </cofactor>
    <cofactor evidence="1">
        <name>Co(2+)</name>
        <dbReference type="ChEBI" id="CHEBI:48828"/>
    </cofactor>
    <text evidence="1">Binds 2 Zn(2+) or Co(2+) ions per subunit.</text>
</comment>
<comment type="pathway">
    <text evidence="1">Amino-acid biosynthesis; L-lysine biosynthesis via DAP pathway; LL-2,6-diaminopimelate from (S)-tetrahydrodipicolinate (succinylase route): step 3/3.</text>
</comment>
<comment type="subunit">
    <text evidence="1">Homodimer.</text>
</comment>
<comment type="similarity">
    <text evidence="1">Belongs to the peptidase M20A family. DapE subfamily.</text>
</comment>
<comment type="sequence caution" evidence="2">
    <conflict type="erroneous initiation">
        <sequence resource="EMBL-CDS" id="ABV85289"/>
    </conflict>
</comment>
<accession>A8F303</accession>
<feature type="chain" id="PRO_0000375703" description="Succinyl-diaminopimelate desuccinylase">
    <location>
        <begin position="1"/>
        <end position="381"/>
    </location>
</feature>
<feature type="active site" evidence="1">
    <location>
        <position position="71"/>
    </location>
</feature>
<feature type="active site" description="Proton acceptor" evidence="1">
    <location>
        <position position="137"/>
    </location>
</feature>
<feature type="binding site" evidence="1">
    <location>
        <position position="69"/>
    </location>
    <ligand>
        <name>Zn(2+)</name>
        <dbReference type="ChEBI" id="CHEBI:29105"/>
        <label>1</label>
    </ligand>
</feature>
<feature type="binding site" evidence="1">
    <location>
        <position position="103"/>
    </location>
    <ligand>
        <name>Zn(2+)</name>
        <dbReference type="ChEBI" id="CHEBI:29105"/>
        <label>1</label>
    </ligand>
</feature>
<feature type="binding site" evidence="1">
    <location>
        <position position="103"/>
    </location>
    <ligand>
        <name>Zn(2+)</name>
        <dbReference type="ChEBI" id="CHEBI:29105"/>
        <label>2</label>
    </ligand>
</feature>
<feature type="binding site" evidence="1">
    <location>
        <position position="138"/>
    </location>
    <ligand>
        <name>Zn(2+)</name>
        <dbReference type="ChEBI" id="CHEBI:29105"/>
        <label>2</label>
    </ligand>
</feature>
<feature type="binding site" evidence="1">
    <location>
        <position position="166"/>
    </location>
    <ligand>
        <name>Zn(2+)</name>
        <dbReference type="ChEBI" id="CHEBI:29105"/>
        <label>1</label>
    </ligand>
</feature>
<feature type="binding site" evidence="1">
    <location>
        <position position="355"/>
    </location>
    <ligand>
        <name>Zn(2+)</name>
        <dbReference type="ChEBI" id="CHEBI:29105"/>
        <label>2</label>
    </ligand>
</feature>
<proteinExistence type="inferred from homology"/>
<organism>
    <name type="scientific">Rickettsia massiliae (strain Mtu5)</name>
    <dbReference type="NCBI Taxonomy" id="416276"/>
    <lineage>
        <taxon>Bacteria</taxon>
        <taxon>Pseudomonadati</taxon>
        <taxon>Pseudomonadota</taxon>
        <taxon>Alphaproteobacteria</taxon>
        <taxon>Rickettsiales</taxon>
        <taxon>Rickettsiaceae</taxon>
        <taxon>Rickettsieae</taxon>
        <taxon>Rickettsia</taxon>
        <taxon>spotted fever group</taxon>
    </lineage>
</organism>
<dbReference type="EC" id="3.5.1.18" evidence="1"/>
<dbReference type="EMBL" id="CP000683">
    <property type="protein sequence ID" value="ABV85289.1"/>
    <property type="status" value="ALT_INIT"/>
    <property type="molecule type" value="Genomic_DNA"/>
</dbReference>
<dbReference type="RefSeq" id="WP_014366180.1">
    <property type="nucleotide sequence ID" value="NC_009900.1"/>
</dbReference>
<dbReference type="SMR" id="A8F303"/>
<dbReference type="KEGG" id="rms:RMA_1358"/>
<dbReference type="HOGENOM" id="CLU_021802_4_0_5"/>
<dbReference type="UniPathway" id="UPA00034">
    <property type="reaction ID" value="UER00021"/>
</dbReference>
<dbReference type="Proteomes" id="UP000001311">
    <property type="component" value="Chromosome"/>
</dbReference>
<dbReference type="GO" id="GO:0008777">
    <property type="term" value="F:acetylornithine deacetylase activity"/>
    <property type="evidence" value="ECO:0007669"/>
    <property type="project" value="TreeGrafter"/>
</dbReference>
<dbReference type="GO" id="GO:0050897">
    <property type="term" value="F:cobalt ion binding"/>
    <property type="evidence" value="ECO:0007669"/>
    <property type="project" value="UniProtKB-UniRule"/>
</dbReference>
<dbReference type="GO" id="GO:0009014">
    <property type="term" value="F:succinyl-diaminopimelate desuccinylase activity"/>
    <property type="evidence" value="ECO:0007669"/>
    <property type="project" value="UniProtKB-UniRule"/>
</dbReference>
<dbReference type="GO" id="GO:0008270">
    <property type="term" value="F:zinc ion binding"/>
    <property type="evidence" value="ECO:0007669"/>
    <property type="project" value="UniProtKB-UniRule"/>
</dbReference>
<dbReference type="GO" id="GO:0019877">
    <property type="term" value="P:diaminopimelate biosynthetic process"/>
    <property type="evidence" value="ECO:0007669"/>
    <property type="project" value="UniProtKB-UniRule"/>
</dbReference>
<dbReference type="GO" id="GO:0006526">
    <property type="term" value="P:L-arginine biosynthetic process"/>
    <property type="evidence" value="ECO:0007669"/>
    <property type="project" value="TreeGrafter"/>
</dbReference>
<dbReference type="GO" id="GO:0009089">
    <property type="term" value="P:lysine biosynthetic process via diaminopimelate"/>
    <property type="evidence" value="ECO:0007669"/>
    <property type="project" value="UniProtKB-UniRule"/>
</dbReference>
<dbReference type="CDD" id="cd03891">
    <property type="entry name" value="M20_DapE_proteobac"/>
    <property type="match status" value="1"/>
</dbReference>
<dbReference type="Gene3D" id="3.30.70.360">
    <property type="match status" value="1"/>
</dbReference>
<dbReference type="Gene3D" id="3.40.630.10">
    <property type="entry name" value="Zn peptidases"/>
    <property type="match status" value="2"/>
</dbReference>
<dbReference type="HAMAP" id="MF_01690">
    <property type="entry name" value="DapE"/>
    <property type="match status" value="1"/>
</dbReference>
<dbReference type="InterPro" id="IPR001261">
    <property type="entry name" value="ArgE/DapE_CS"/>
</dbReference>
<dbReference type="InterPro" id="IPR036264">
    <property type="entry name" value="Bact_exopeptidase_dim_dom"/>
</dbReference>
<dbReference type="InterPro" id="IPR005941">
    <property type="entry name" value="DapE_proteobac"/>
</dbReference>
<dbReference type="InterPro" id="IPR002933">
    <property type="entry name" value="Peptidase_M20"/>
</dbReference>
<dbReference type="InterPro" id="IPR011650">
    <property type="entry name" value="Peptidase_M20_dimer"/>
</dbReference>
<dbReference type="InterPro" id="IPR050072">
    <property type="entry name" value="Peptidase_M20A"/>
</dbReference>
<dbReference type="NCBIfam" id="TIGR01246">
    <property type="entry name" value="dapE_proteo"/>
    <property type="match status" value="1"/>
</dbReference>
<dbReference type="NCBIfam" id="NF009557">
    <property type="entry name" value="PRK13009.1"/>
    <property type="match status" value="1"/>
</dbReference>
<dbReference type="PANTHER" id="PTHR43808">
    <property type="entry name" value="ACETYLORNITHINE DEACETYLASE"/>
    <property type="match status" value="1"/>
</dbReference>
<dbReference type="PANTHER" id="PTHR43808:SF31">
    <property type="entry name" value="N-ACETYL-L-CITRULLINE DEACETYLASE"/>
    <property type="match status" value="1"/>
</dbReference>
<dbReference type="Pfam" id="PF07687">
    <property type="entry name" value="M20_dimer"/>
    <property type="match status" value="1"/>
</dbReference>
<dbReference type="Pfam" id="PF01546">
    <property type="entry name" value="Peptidase_M20"/>
    <property type="match status" value="1"/>
</dbReference>
<dbReference type="SUPFAM" id="SSF55031">
    <property type="entry name" value="Bacterial exopeptidase dimerisation domain"/>
    <property type="match status" value="1"/>
</dbReference>
<dbReference type="SUPFAM" id="SSF53187">
    <property type="entry name" value="Zn-dependent exopeptidases"/>
    <property type="match status" value="1"/>
</dbReference>
<dbReference type="PROSITE" id="PS00759">
    <property type="entry name" value="ARGE_DAPE_CPG2_2"/>
    <property type="match status" value="1"/>
</dbReference>
<gene>
    <name evidence="1" type="primary">dapE</name>
    <name type="ordered locus">RMA_1358</name>
</gene>
<reference key="1">
    <citation type="journal article" date="2007" name="Genome Res.">
        <title>Lateral gene transfer between obligate intracellular bacteria: evidence from the Rickettsia massiliae genome.</title>
        <authorList>
            <person name="Blanc G."/>
            <person name="Ogata H."/>
            <person name="Robert C."/>
            <person name="Audic S."/>
            <person name="Claverie J.-M."/>
            <person name="Raoult D."/>
        </authorList>
    </citation>
    <scope>NUCLEOTIDE SEQUENCE [LARGE SCALE GENOMIC DNA]</scope>
    <source>
        <strain>Mtu5</strain>
    </source>
</reference>
<sequence>MYINYLKDLIGFKSVTPKSDGAIEYIDDLLKQHGFKTEIKIFGDSKSEQVTNLYAVFGSNEPNICFVGHVDVVLAGNHELWHNASPFKASQQDDKIYGRGAVDMKGAIACFLAASLDFIKNNTDFKGSISFLLTSDEEGKAKHGTKEMLQYIYDQGYKINFAIVGEPTCEKEIGDAIKIGRRGSVNFKLNIEGLSGHVAYPHKANNPLPCLIIILNELTNIKLDEGIEFFQRSNLEVTNIEVSNNTSNVIPASTEASFNIRFNNLHSAETLAKQVEEIIKQHCKEYKVDYKLEYSSSAESFIQNPSDKIKEFAKVVEHTLKIKPEFSTSGGTSDARFVKNYCPLVEFGLLSETAHKINEYTKISDLQKLYDVYYNFLMEIL</sequence>
<keyword id="KW-0028">Amino-acid biosynthesis</keyword>
<keyword id="KW-0170">Cobalt</keyword>
<keyword id="KW-0220">Diaminopimelate biosynthesis</keyword>
<keyword id="KW-0378">Hydrolase</keyword>
<keyword id="KW-0457">Lysine biosynthesis</keyword>
<keyword id="KW-0479">Metal-binding</keyword>
<keyword id="KW-0862">Zinc</keyword>
<protein>
    <recommendedName>
        <fullName evidence="1">Succinyl-diaminopimelate desuccinylase</fullName>
        <shortName evidence="1">SDAP desuccinylase</shortName>
        <ecNumber evidence="1">3.5.1.18</ecNumber>
    </recommendedName>
    <alternativeName>
        <fullName evidence="1">N-succinyl-LL-2,6-diaminoheptanedioate amidohydrolase</fullName>
    </alternativeName>
</protein>